<accession>Q06675</accession>
<accession>D6VSU9</accession>
<reference key="1">
    <citation type="journal article" date="1997" name="Nature">
        <title>The nucleotide sequence of Saccharomyces cerevisiae chromosome IV.</title>
        <authorList>
            <person name="Jacq C."/>
            <person name="Alt-Moerbe J."/>
            <person name="Andre B."/>
            <person name="Arnold W."/>
            <person name="Bahr A."/>
            <person name="Ballesta J.P.G."/>
            <person name="Bargues M."/>
            <person name="Baron L."/>
            <person name="Becker A."/>
            <person name="Biteau N."/>
            <person name="Bloecker H."/>
            <person name="Blugeon C."/>
            <person name="Boskovic J."/>
            <person name="Brandt P."/>
            <person name="Brueckner M."/>
            <person name="Buitrago M.J."/>
            <person name="Coster F."/>
            <person name="Delaveau T."/>
            <person name="del Rey F."/>
            <person name="Dujon B."/>
            <person name="Eide L.G."/>
            <person name="Garcia-Cantalejo J.M."/>
            <person name="Goffeau A."/>
            <person name="Gomez-Peris A."/>
            <person name="Granotier C."/>
            <person name="Hanemann V."/>
            <person name="Hankeln T."/>
            <person name="Hoheisel J.D."/>
            <person name="Jaeger W."/>
            <person name="Jimenez A."/>
            <person name="Jonniaux J.-L."/>
            <person name="Kraemer C."/>
            <person name="Kuester H."/>
            <person name="Laamanen P."/>
            <person name="Legros Y."/>
            <person name="Louis E.J."/>
            <person name="Moeller-Rieker S."/>
            <person name="Monnet A."/>
            <person name="Moro M."/>
            <person name="Mueller-Auer S."/>
            <person name="Nussbaumer B."/>
            <person name="Paricio N."/>
            <person name="Paulin L."/>
            <person name="Perea J."/>
            <person name="Perez-Alonso M."/>
            <person name="Perez-Ortin J.E."/>
            <person name="Pohl T.M."/>
            <person name="Prydz H."/>
            <person name="Purnelle B."/>
            <person name="Rasmussen S.W."/>
            <person name="Remacha M.A."/>
            <person name="Revuelta J.L."/>
            <person name="Rieger M."/>
            <person name="Salom D."/>
            <person name="Saluz H.P."/>
            <person name="Saiz J.E."/>
            <person name="Saren A.-M."/>
            <person name="Schaefer M."/>
            <person name="Scharfe M."/>
            <person name="Schmidt E.R."/>
            <person name="Schneider C."/>
            <person name="Scholler P."/>
            <person name="Schwarz S."/>
            <person name="Soler-Mira A."/>
            <person name="Urrestarazu L.A."/>
            <person name="Verhasselt P."/>
            <person name="Vissers S."/>
            <person name="Voet M."/>
            <person name="Volckaert G."/>
            <person name="Wagner G."/>
            <person name="Wambutt R."/>
            <person name="Wedler E."/>
            <person name="Wedler H."/>
            <person name="Woelfl S."/>
            <person name="Harris D.E."/>
            <person name="Bowman S."/>
            <person name="Brown D."/>
            <person name="Churcher C.M."/>
            <person name="Connor R."/>
            <person name="Dedman K."/>
            <person name="Gentles S."/>
            <person name="Hamlin N."/>
            <person name="Hunt S."/>
            <person name="Jones L."/>
            <person name="McDonald S."/>
            <person name="Murphy L.D."/>
            <person name="Niblett D."/>
            <person name="Odell C."/>
            <person name="Oliver K."/>
            <person name="Rajandream M.A."/>
            <person name="Richards C."/>
            <person name="Shore L."/>
            <person name="Walsh S.V."/>
            <person name="Barrell B.G."/>
            <person name="Dietrich F.S."/>
            <person name="Mulligan J.T."/>
            <person name="Allen E."/>
            <person name="Araujo R."/>
            <person name="Aviles E."/>
            <person name="Berno A."/>
            <person name="Carpenter J."/>
            <person name="Chen E."/>
            <person name="Cherry J.M."/>
            <person name="Chung E."/>
            <person name="Duncan M."/>
            <person name="Hunicke-Smith S."/>
            <person name="Hyman R.W."/>
            <person name="Komp C."/>
            <person name="Lashkari D."/>
            <person name="Lew H."/>
            <person name="Lin D."/>
            <person name="Mosedale D."/>
            <person name="Nakahara K."/>
            <person name="Namath A."/>
            <person name="Oefner P."/>
            <person name="Oh C."/>
            <person name="Petel F.X."/>
            <person name="Roberts D."/>
            <person name="Schramm S."/>
            <person name="Schroeder M."/>
            <person name="Shogren T."/>
            <person name="Shroff N."/>
            <person name="Winant A."/>
            <person name="Yelton M.A."/>
            <person name="Botstein D."/>
            <person name="Davis R.W."/>
            <person name="Johnston M."/>
            <person name="Andrews S."/>
            <person name="Brinkman R."/>
            <person name="Cooper J."/>
            <person name="Ding H."/>
            <person name="Du Z."/>
            <person name="Favello A."/>
            <person name="Fulton L."/>
            <person name="Gattung S."/>
            <person name="Greco T."/>
            <person name="Hallsworth K."/>
            <person name="Hawkins J."/>
            <person name="Hillier L.W."/>
            <person name="Jier M."/>
            <person name="Johnson D."/>
            <person name="Johnston L."/>
            <person name="Kirsten J."/>
            <person name="Kucaba T."/>
            <person name="Langston Y."/>
            <person name="Latreille P."/>
            <person name="Le T."/>
            <person name="Mardis E."/>
            <person name="Menezes S."/>
            <person name="Miller N."/>
            <person name="Nhan M."/>
            <person name="Pauley A."/>
            <person name="Peluso D."/>
            <person name="Rifkin L."/>
            <person name="Riles L."/>
            <person name="Taich A."/>
            <person name="Trevaskis E."/>
            <person name="Vignati D."/>
            <person name="Wilcox L."/>
            <person name="Wohldman P."/>
            <person name="Vaudin M."/>
            <person name="Wilson R."/>
            <person name="Waterston R."/>
            <person name="Albermann K."/>
            <person name="Hani J."/>
            <person name="Heumann K."/>
            <person name="Kleine K."/>
            <person name="Mewes H.-W."/>
            <person name="Zollner A."/>
            <person name="Zaccaria P."/>
        </authorList>
    </citation>
    <scope>NUCLEOTIDE SEQUENCE [LARGE SCALE GENOMIC DNA]</scope>
    <source>
        <strain>ATCC 204508 / S288c</strain>
    </source>
</reference>
<reference key="2">
    <citation type="journal article" date="2014" name="G3 (Bethesda)">
        <title>The reference genome sequence of Saccharomyces cerevisiae: Then and now.</title>
        <authorList>
            <person name="Engel S.R."/>
            <person name="Dietrich F.S."/>
            <person name="Fisk D.G."/>
            <person name="Binkley G."/>
            <person name="Balakrishnan R."/>
            <person name="Costanzo M.C."/>
            <person name="Dwight S.S."/>
            <person name="Hitz B.C."/>
            <person name="Karra K."/>
            <person name="Nash R.S."/>
            <person name="Weng S."/>
            <person name="Wong E.D."/>
            <person name="Lloyd P."/>
            <person name="Skrzypek M.S."/>
            <person name="Miyasato S.R."/>
            <person name="Simison M."/>
            <person name="Cherry J.M."/>
        </authorList>
    </citation>
    <scope>GENOME REANNOTATION</scope>
    <source>
        <strain>ATCC 204508 / S288c</strain>
    </source>
</reference>
<reference key="3">
    <citation type="journal article" date="2007" name="Genome Res.">
        <title>Approaching a complete repository of sequence-verified protein-encoding clones for Saccharomyces cerevisiae.</title>
        <authorList>
            <person name="Hu Y."/>
            <person name="Rolfs A."/>
            <person name="Bhullar B."/>
            <person name="Murthy T.V.S."/>
            <person name="Zhu C."/>
            <person name="Berger M.F."/>
            <person name="Camargo A.A."/>
            <person name="Kelley F."/>
            <person name="McCarron S."/>
            <person name="Jepson D."/>
            <person name="Richardson A."/>
            <person name="Raphael J."/>
            <person name="Moreira D."/>
            <person name="Taycher E."/>
            <person name="Zuo D."/>
            <person name="Mohr S."/>
            <person name="Kane M.F."/>
            <person name="Williamson J."/>
            <person name="Simpson A.J.G."/>
            <person name="Bulyk M.L."/>
            <person name="Harlow E."/>
            <person name="Marsischky G."/>
            <person name="Kolodner R.D."/>
            <person name="LaBaer J."/>
        </authorList>
    </citation>
    <scope>NUCLEOTIDE SEQUENCE [GENOMIC DNA] OF 118-368</scope>
    <source>
        <strain>ATCC 204508 / S288c</strain>
    </source>
</reference>
<reference key="4">
    <citation type="journal article" date="1999" name="Genes Dev.">
        <title>A putative protein complex consisting of Ctf19, Mcm21, and Okp1 represents a missing link in the budding yeast kinetochore.</title>
        <authorList>
            <person name="Ortiz J."/>
            <person name="Stemmann O."/>
            <person name="Rank S."/>
            <person name="Lechner J."/>
        </authorList>
    </citation>
    <scope>REVISION OF GENE MODEL</scope>
    <scope>INTERACTION WITH CTF19 AND OKP1</scope>
    <scope>SUBCELLULAR LOCATION</scope>
</reference>
<reference key="5">
    <citation type="journal article" date="1999" name="Mol. Microbiol.">
        <title>MCM21 and MCM22, two novel genes of the yeast Saccharomyces cerevisiae are required for chromosome transmission.</title>
        <authorList>
            <person name="Poddar A."/>
            <person name="Roy N."/>
            <person name="Sinha P."/>
        </authorList>
    </citation>
    <scope>FUNCTION</scope>
</reference>
<reference key="6">
    <citation type="journal article" date="2002" name="Cell">
        <title>Phospho-regulation of kinetochore-microtubule attachments by the Aurora kinase Ipl1p.</title>
        <authorList>
            <person name="Cheeseman I.M."/>
            <person name="Anderson S."/>
            <person name="Jwa M."/>
            <person name="Green E.M."/>
            <person name="Kang J.-S."/>
            <person name="Yates J.R. III"/>
            <person name="Chan C.S.M."/>
            <person name="Drubin D.G."/>
            <person name="Barnes G."/>
        </authorList>
    </citation>
    <scope>IDENTIFICATION BY MASS SPECTROMETRY</scope>
    <scope>COMPONENT OF CTF19 COMPLEX</scope>
</reference>
<reference key="7">
    <citation type="journal article" date="2003" name="Genes Dev.">
        <title>Hierarchical assembly of the budding yeast kinetochore from multiple subcomplexes.</title>
        <authorList>
            <person name="De Wulf P."/>
            <person name="McAinsh A.D."/>
            <person name="Sorger P.K."/>
        </authorList>
    </citation>
    <scope>IDENTIFICATION BY MASS SPECTROMETRY</scope>
    <scope>COMPONENT OF COMA COMPLEX</scope>
</reference>
<reference key="8">
    <citation type="journal article" date="2003" name="Nature">
        <title>Global analysis of protein localization in budding yeast.</title>
        <authorList>
            <person name="Huh W.-K."/>
            <person name="Falvo J.V."/>
            <person name="Gerke L.C."/>
            <person name="Carroll A.S."/>
            <person name="Howson R.W."/>
            <person name="Weissman J.S."/>
            <person name="O'Shea E.K."/>
        </authorList>
    </citation>
    <scope>SUBCELLULAR LOCATION [LARGE SCALE ANALYSIS]</scope>
</reference>
<reference key="9">
    <citation type="journal article" date="2003" name="Nature">
        <title>Global analysis of protein expression in yeast.</title>
        <authorList>
            <person name="Ghaemmaghami S."/>
            <person name="Huh W.-K."/>
            <person name="Bower K."/>
            <person name="Howson R.W."/>
            <person name="Belle A."/>
            <person name="Dephoure N."/>
            <person name="O'Shea E.K."/>
            <person name="Weissman J.S."/>
        </authorList>
    </citation>
    <scope>LEVEL OF PROTEIN EXPRESSION [LARGE SCALE ANALYSIS]</scope>
</reference>
<reference key="10">
    <citation type="journal article" date="2008" name="Mol. Cell. Proteomics">
        <title>A multidimensional chromatography technology for in-depth phosphoproteome analysis.</title>
        <authorList>
            <person name="Albuquerque C.P."/>
            <person name="Smolka M.B."/>
            <person name="Payne S.H."/>
            <person name="Bafna V."/>
            <person name="Eng J."/>
            <person name="Zhou H."/>
        </authorList>
    </citation>
    <scope>PHOSPHORYLATION [LARGE SCALE ANALYSIS] AT THR-88</scope>
    <scope>IDENTIFICATION BY MASS SPECTROMETRY [LARGE SCALE ANALYSIS]</scope>
</reference>
<reference key="11">
    <citation type="journal article" date="2012" name="Nat. Cell Biol.">
        <title>CENP-T proteins are conserved centromere receptors of the Ndc80 complex.</title>
        <authorList>
            <person name="Schleiffer A."/>
            <person name="Maier M."/>
            <person name="Litos G."/>
            <person name="Lampert F."/>
            <person name="Hornung P."/>
            <person name="Mechtler K."/>
            <person name="Westermann S."/>
        </authorList>
    </citation>
    <scope>IDENTIFICATION IN CCAN</scope>
    <scope>SUBUNIT</scope>
</reference>
<reference key="12">
    <citation type="journal article" date="2017" name="EMBO J.">
        <title>Molecular basis for inner kinetochore configuration through RWD domain-peptide interactions.</title>
        <authorList>
            <person name="Schmitzberger F."/>
            <person name="Richter M.M."/>
            <person name="Gordiyenko Y."/>
            <person name="Robinson C.V."/>
            <person name="Dadlez M."/>
            <person name="Westermann S."/>
        </authorList>
    </citation>
    <scope>SUBCELLULAR LOCATION</scope>
</reference>
<proteinExistence type="evidence at protein level"/>
<organism>
    <name type="scientific">Saccharomyces cerevisiae (strain ATCC 204508 / S288c)</name>
    <name type="common">Baker's yeast</name>
    <dbReference type="NCBI Taxonomy" id="559292"/>
    <lineage>
        <taxon>Eukaryota</taxon>
        <taxon>Fungi</taxon>
        <taxon>Dikarya</taxon>
        <taxon>Ascomycota</taxon>
        <taxon>Saccharomycotina</taxon>
        <taxon>Saccharomycetes</taxon>
        <taxon>Saccharomycetales</taxon>
        <taxon>Saccharomycetaceae</taxon>
        <taxon>Saccharomyces</taxon>
    </lineage>
</organism>
<gene>
    <name type="primary">MCM21</name>
    <name type="synonym">CTF5</name>
    <name type="ordered locus">YDR318W</name>
</gene>
<comment type="function">
    <text evidence="9">Component of the kinetochore, a multiprotein complex that assembles on centromeric DNA and attaches chromosomes to spindle microtubules, mediating chromosome segregation and sister chromatid segregation during meiosis and mitosis. Component of the inner kinetochore COMA complex, which connects centromere-associated proteins and the outer kinetochore. COMA interacts with other inner kinetochore proteins to form the inner kinetochore constitutive centromere-associated network (CCAN), which serves as a structural platform for outer kinetochore assembly.</text>
</comment>
<comment type="subunit">
    <text evidence="1 3 4 6 7">Component of the heterotetrameric kinetochore subcomplex COMA, which consists of AME1, CTF19, MCM21 and OKP1 (PubMed:10323865, PubMed:14633972). The COMA subcomplex is part of a larger constitutive centromere-associated network (CCAN) (also known as central kinetochore CTF19 complex in yeast), which is composed of at least AME1, CHL4, CNN1, CTF3, CTF19, IML3, MCM16, MCM21, MCM22, MHF1, MHF2, MIF2, NKP1, NKP2, OKP1 and WIP1 (PubMed:12408861, PubMed:22561346). COMA binds the centromeric nucleosome-binding protein MIF2, and to the outer kinetochore MIND subcomplex (By similarity).</text>
</comment>
<comment type="subcellular location">
    <subcellularLocation>
        <location evidence="8">Nucleus</location>
    </subcellularLocation>
    <subcellularLocation>
        <location evidence="8">Chromosome</location>
        <location evidence="8">Centromere</location>
        <location evidence="8">Kinetochore</location>
    </subcellularLocation>
</comment>
<comment type="miscellaneous">
    <text evidence="5">Present with 952 molecules/cell in log phase SD medium.</text>
</comment>
<comment type="similarity">
    <text evidence="11">Belongs to the CENP-O/MCM21 family.</text>
</comment>
<comment type="sequence caution" evidence="11">
    <conflict type="erroneous gene model prediction">
        <sequence resource="EMBL-CDS" id="AAB64754"/>
    </conflict>
</comment>
<evidence type="ECO:0000250" key="1">
    <source>
        <dbReference type="UniProtKB" id="Q6CRN7"/>
    </source>
</evidence>
<evidence type="ECO:0000255" key="2"/>
<evidence type="ECO:0000269" key="3">
    <source>
    </source>
</evidence>
<evidence type="ECO:0000269" key="4">
    <source>
    </source>
</evidence>
<evidence type="ECO:0000269" key="5">
    <source>
    </source>
</evidence>
<evidence type="ECO:0000269" key="6">
    <source>
    </source>
</evidence>
<evidence type="ECO:0000269" key="7">
    <source>
    </source>
</evidence>
<evidence type="ECO:0000269" key="8">
    <source>
    </source>
</evidence>
<evidence type="ECO:0000269" key="9">
    <source>
    </source>
</evidence>
<evidence type="ECO:0000303" key="10">
    <source>
    </source>
</evidence>
<evidence type="ECO:0000305" key="11"/>
<evidence type="ECO:0007744" key="12">
    <source>
    </source>
</evidence>
<evidence type="ECO:0007829" key="13">
    <source>
        <dbReference type="PDB" id="8OVW"/>
    </source>
</evidence>
<evidence type="ECO:0007829" key="14">
    <source>
        <dbReference type="PDB" id="8OW0"/>
    </source>
</evidence>
<sequence length="368" mass="42971">MSRIDDLQQDIESLLSEINSLEESREKLKAKIKDKRKNEESANPIVQEFEDLFDQFPQLNNFLFNEHPELEETDDKDISRAQADIPATPIPYEPKKRAKLENEEILPEQEWVLKTQPMVQHQMFDPGVADLLDTDILTSPSKRKRKLKIDDISTSDRSELEDYIVLENVYRMFGITFFPLVDPIDLKIKDASGEIFVDREMLGIRLEVFSERTSQFEKPHYVLLKKRIKSNSWFLFKHTIPSFIDVQGIFDDTNGGLVISHDDAYLFAKRVFLQLVEVQKRRQIFKDLEAKKIIHDLDLDLESSMVSFFVKDIKVELFVKQNEIVSCSILDDIHDFSQNNKSKWEIALLGSLDDLELKLNHSFATIFK</sequence>
<name>CENPO_YEAST</name>
<feature type="chain" id="PRO_0000096282" description="Inner kinetochore subunit MCM21">
    <location>
        <begin position="1"/>
        <end position="368"/>
    </location>
</feature>
<feature type="coiled-coil region" evidence="2">
    <location>
        <begin position="1"/>
        <end position="43"/>
    </location>
</feature>
<feature type="modified residue" description="Phosphothreonine" evidence="12">
    <location>
        <position position="88"/>
    </location>
</feature>
<feature type="turn" evidence="13">
    <location>
        <begin position="126"/>
        <end position="128"/>
    </location>
</feature>
<feature type="strand" evidence="13">
    <location>
        <begin position="129"/>
        <end position="132"/>
    </location>
</feature>
<feature type="helix" evidence="13">
    <location>
        <begin position="135"/>
        <end position="138"/>
    </location>
</feature>
<feature type="helix" evidence="13">
    <location>
        <begin position="140"/>
        <end position="147"/>
    </location>
</feature>
<feature type="helix" evidence="13">
    <location>
        <begin position="155"/>
        <end position="171"/>
    </location>
</feature>
<feature type="strand" evidence="13">
    <location>
        <begin position="174"/>
        <end position="180"/>
    </location>
</feature>
<feature type="helix" evidence="13">
    <location>
        <begin position="183"/>
        <end position="185"/>
    </location>
</feature>
<feature type="strand" evidence="13">
    <location>
        <begin position="186"/>
        <end position="188"/>
    </location>
</feature>
<feature type="strand" evidence="13">
    <location>
        <begin position="190"/>
        <end position="192"/>
    </location>
</feature>
<feature type="strand" evidence="13">
    <location>
        <begin position="195"/>
        <end position="199"/>
    </location>
</feature>
<feature type="strand" evidence="13">
    <location>
        <begin position="201"/>
        <end position="206"/>
    </location>
</feature>
<feature type="turn" evidence="13">
    <location>
        <begin position="211"/>
        <end position="214"/>
    </location>
</feature>
<feature type="strand" evidence="13">
    <location>
        <begin position="220"/>
        <end position="226"/>
    </location>
</feature>
<feature type="turn" evidence="13">
    <location>
        <begin position="228"/>
        <end position="230"/>
    </location>
</feature>
<feature type="strand" evidence="13">
    <location>
        <begin position="233"/>
        <end position="238"/>
    </location>
</feature>
<feature type="helix" evidence="13">
    <location>
        <begin position="246"/>
        <end position="252"/>
    </location>
</feature>
<feature type="helix" evidence="13">
    <location>
        <begin position="253"/>
        <end position="255"/>
    </location>
</feature>
<feature type="helix" evidence="13">
    <location>
        <begin position="261"/>
        <end position="290"/>
    </location>
</feature>
<feature type="strand" evidence="14">
    <location>
        <begin position="297"/>
        <end position="299"/>
    </location>
</feature>
<feature type="strand" evidence="13">
    <location>
        <begin position="305"/>
        <end position="312"/>
    </location>
</feature>
<feature type="strand" evidence="13">
    <location>
        <begin position="314"/>
        <end position="320"/>
    </location>
</feature>
<feature type="strand" evidence="13">
    <location>
        <begin position="323"/>
        <end position="329"/>
    </location>
</feature>
<feature type="helix" evidence="13">
    <location>
        <begin position="339"/>
        <end position="347"/>
    </location>
</feature>
<feature type="helix" evidence="13">
    <location>
        <begin position="352"/>
        <end position="363"/>
    </location>
</feature>
<keyword id="KW-0002">3D-structure</keyword>
<keyword id="KW-0131">Cell cycle</keyword>
<keyword id="KW-0132">Cell division</keyword>
<keyword id="KW-0137">Centromere</keyword>
<keyword id="KW-0158">Chromosome</keyword>
<keyword id="KW-0175">Coiled coil</keyword>
<keyword id="KW-0995">Kinetochore</keyword>
<keyword id="KW-0469">Meiosis</keyword>
<keyword id="KW-0498">Mitosis</keyword>
<keyword id="KW-0539">Nucleus</keyword>
<keyword id="KW-0597">Phosphoprotein</keyword>
<keyword id="KW-1185">Reference proteome</keyword>
<protein>
    <recommendedName>
        <fullName evidence="11">Inner kinetochore subunit MCM21</fullName>
    </recommendedName>
    <alternativeName>
        <fullName evidence="10">CENP-O homolog</fullName>
    </alternativeName>
    <alternativeName>
        <fullName>Chromosome transmission fidelity protein 5</fullName>
    </alternativeName>
    <alternativeName>
        <fullName evidence="11">Constitutive centromere-associated network protein MCM21</fullName>
    </alternativeName>
    <alternativeName>
        <fullName>Minichromosome maintenance protein 21</fullName>
    </alternativeName>
</protein>
<dbReference type="EMBL" id="U32517">
    <property type="protein sequence ID" value="AAB64754.1"/>
    <property type="status" value="ALT_SEQ"/>
    <property type="molecule type" value="Genomic_DNA"/>
</dbReference>
<dbReference type="EMBL" id="AY557737">
    <property type="protein sequence ID" value="AAS56063.1"/>
    <property type="molecule type" value="Genomic_DNA"/>
</dbReference>
<dbReference type="EMBL" id="BK006938">
    <property type="protein sequence ID" value="DAA12159.1"/>
    <property type="molecule type" value="Genomic_DNA"/>
</dbReference>
<dbReference type="PIR" id="S59784">
    <property type="entry name" value="S59784"/>
</dbReference>
<dbReference type="RefSeq" id="NP_010604.4">
    <property type="nucleotide sequence ID" value="NM_001180626.3"/>
</dbReference>
<dbReference type="PDB" id="6NUW">
    <property type="method" value="EM"/>
    <property type="resolution" value="4.25 A"/>
    <property type="chains" value="C=1-368"/>
</dbReference>
<dbReference type="PDB" id="6QLD">
    <property type="method" value="EM"/>
    <property type="resolution" value="4.15 A"/>
    <property type="chains" value="O=153-364"/>
</dbReference>
<dbReference type="PDB" id="6QLE">
    <property type="method" value="EM"/>
    <property type="resolution" value="3.55 A"/>
    <property type="chains" value="O=1-368"/>
</dbReference>
<dbReference type="PDB" id="6QLF">
    <property type="method" value="EM"/>
    <property type="resolution" value="3.45 A"/>
    <property type="chains" value="O=1-368"/>
</dbReference>
<dbReference type="PDB" id="8OVW">
    <property type="method" value="EM"/>
    <property type="resolution" value="3.40 A"/>
    <property type="chains" value="O=1-368"/>
</dbReference>
<dbReference type="PDB" id="8OVX">
    <property type="method" value="EM"/>
    <property type="resolution" value="3.40 A"/>
    <property type="chains" value="O=1-368"/>
</dbReference>
<dbReference type="PDB" id="8OW0">
    <property type="method" value="EM"/>
    <property type="resolution" value="3.40 A"/>
    <property type="chains" value="O=1-368"/>
</dbReference>
<dbReference type="PDB" id="8OW1">
    <property type="method" value="EM"/>
    <property type="resolution" value="3.70 A"/>
    <property type="chains" value="O/OO=1-368"/>
</dbReference>
<dbReference type="PDBsum" id="6NUW"/>
<dbReference type="PDBsum" id="6QLD"/>
<dbReference type="PDBsum" id="6QLE"/>
<dbReference type="PDBsum" id="6QLF"/>
<dbReference type="PDBsum" id="8OVW"/>
<dbReference type="PDBsum" id="8OVX"/>
<dbReference type="PDBsum" id="8OW0"/>
<dbReference type="PDBsum" id="8OW1"/>
<dbReference type="EMDB" id="EMD-0523"/>
<dbReference type="EMDB" id="EMD-17224"/>
<dbReference type="EMDB" id="EMD-17225"/>
<dbReference type="EMDB" id="EMD-17226"/>
<dbReference type="EMDB" id="EMD-17227"/>
<dbReference type="EMDB" id="EMD-4579"/>
<dbReference type="EMDB" id="EMD-4580"/>
<dbReference type="EMDB" id="EMD-4581"/>
<dbReference type="SMR" id="Q06675"/>
<dbReference type="BioGRID" id="32374">
    <property type="interactions" value="235"/>
</dbReference>
<dbReference type="ComplexPortal" id="CPX-1187">
    <property type="entry name" value="COMA complex"/>
</dbReference>
<dbReference type="ComplexPortal" id="CPX-2533">
    <property type="entry name" value="Kinetochore CCAN complex"/>
</dbReference>
<dbReference type="DIP" id="DIP-2240N"/>
<dbReference type="FunCoup" id="Q06675">
    <property type="interactions" value="120"/>
</dbReference>
<dbReference type="IntAct" id="Q06675">
    <property type="interactions" value="46"/>
</dbReference>
<dbReference type="MINT" id="Q06675"/>
<dbReference type="STRING" id="4932.YDR318W"/>
<dbReference type="iPTMnet" id="Q06675"/>
<dbReference type="PaxDb" id="4932-YDR318W"/>
<dbReference type="PeptideAtlas" id="Q06675"/>
<dbReference type="EnsemblFungi" id="YDR318W_mRNA">
    <property type="protein sequence ID" value="YDR318W"/>
    <property type="gene ID" value="YDR318W"/>
</dbReference>
<dbReference type="GeneID" id="851916"/>
<dbReference type="KEGG" id="sce:YDR318W"/>
<dbReference type="AGR" id="SGD:S000002726"/>
<dbReference type="SGD" id="S000002726">
    <property type="gene designation" value="MCM21"/>
</dbReference>
<dbReference type="VEuPathDB" id="FungiDB:YDR318W"/>
<dbReference type="eggNOG" id="ENOG502RXWX">
    <property type="taxonomic scope" value="Eukaryota"/>
</dbReference>
<dbReference type="HOGENOM" id="CLU_068734_0_0_1"/>
<dbReference type="InParanoid" id="Q06675"/>
<dbReference type="OMA" id="NHSFATI"/>
<dbReference type="OrthoDB" id="10050372at2759"/>
<dbReference type="BioCyc" id="YEAST:G3O-29876-MONOMER"/>
<dbReference type="BioGRID-ORCS" id="851916">
    <property type="hits" value="7 hits in 10 CRISPR screens"/>
</dbReference>
<dbReference type="PRO" id="PR:Q06675"/>
<dbReference type="Proteomes" id="UP000002311">
    <property type="component" value="Chromosome IV"/>
</dbReference>
<dbReference type="RNAct" id="Q06675">
    <property type="molecule type" value="protein"/>
</dbReference>
<dbReference type="GO" id="GO:0000817">
    <property type="term" value="C:COMA complex"/>
    <property type="evidence" value="ECO:0000314"/>
    <property type="project" value="SGD"/>
</dbReference>
<dbReference type="GO" id="GO:0000776">
    <property type="term" value="C:kinetochore"/>
    <property type="evidence" value="ECO:0000314"/>
    <property type="project" value="SGD"/>
</dbReference>
<dbReference type="GO" id="GO:0008608">
    <property type="term" value="P:attachment of spindle microtubules to kinetochore"/>
    <property type="evidence" value="ECO:0000303"/>
    <property type="project" value="ComplexPortal"/>
</dbReference>
<dbReference type="GO" id="GO:0051301">
    <property type="term" value="P:cell division"/>
    <property type="evidence" value="ECO:0007669"/>
    <property type="project" value="UniProtKB-KW"/>
</dbReference>
<dbReference type="GO" id="GO:0034508">
    <property type="term" value="P:centromere complex assembly"/>
    <property type="evidence" value="ECO:0007669"/>
    <property type="project" value="InterPro"/>
</dbReference>
<dbReference type="GO" id="GO:0034087">
    <property type="term" value="P:establishment of mitotic sister chromatid cohesion"/>
    <property type="evidence" value="ECO:0000315"/>
    <property type="project" value="SGD"/>
</dbReference>
<dbReference type="GO" id="GO:1905262">
    <property type="term" value="P:negative regulation of meiotic DNA double-strand break formation involved in reciprocal meiotic recombination"/>
    <property type="evidence" value="ECO:0000315"/>
    <property type="project" value="SGD"/>
</dbReference>
<dbReference type="GO" id="GO:0071459">
    <property type="term" value="P:protein localization to chromosome, centromeric region"/>
    <property type="evidence" value="ECO:0000315"/>
    <property type="project" value="SGD"/>
</dbReference>
<dbReference type="CDD" id="cd23834">
    <property type="entry name" value="DRWD-C_Mcm21"/>
    <property type="match status" value="1"/>
</dbReference>
<dbReference type="CDD" id="cd23830">
    <property type="entry name" value="DRWD-N_Mcm21"/>
    <property type="match status" value="1"/>
</dbReference>
<dbReference type="InterPro" id="IPR018464">
    <property type="entry name" value="CENP-O"/>
</dbReference>
<dbReference type="Pfam" id="PF09496">
    <property type="entry name" value="CENP-O"/>
    <property type="match status" value="1"/>
</dbReference>